<proteinExistence type="inferred from homology"/>
<sequence>MIKQLYKNITICSLTISTALTVFPATSYAKINSEIKAVSEKNLDGDTKMYTRTATTSDSQKNITQSLQFNFLTEPNYDKETVFIKAKGTIGSGLRILDPNGYWNSTLRWPGSYSVSIQNVDDNNNTNVTDFAPKNQDESREVKYTYGYKTGGDFSINRGGLPGNITKESNYSETISYQQPSYRTLLDQSTSHKGVGWKVEAHLINNMGHDHTRQLTNDSDNRTKSEIFSLTRNGNLWAKDNFTPKNKMPVTVSEGFNPEFLAVMSHDKKDEGKSKFVVHYKRSMDEFKIDWNRHGFWGYWSGENHVDKKEEKLSALYEVDWKTHDVKFVKVLNDNEKK</sequence>
<organism>
    <name type="scientific">Staphylococcus aureus (strain bovine RF122 / ET3-1)</name>
    <dbReference type="NCBI Taxonomy" id="273036"/>
    <lineage>
        <taxon>Bacteria</taxon>
        <taxon>Bacillati</taxon>
        <taxon>Bacillota</taxon>
        <taxon>Bacilli</taxon>
        <taxon>Bacillales</taxon>
        <taxon>Staphylococcaceae</taxon>
        <taxon>Staphylococcus</taxon>
    </lineage>
</organism>
<evidence type="ECO:0000255" key="1"/>
<evidence type="ECO:0000305" key="2"/>
<comment type="similarity">
    <text evidence="2">Belongs to the aerolysin family.</text>
</comment>
<dbReference type="EMBL" id="AJ938182">
    <property type="protein sequence ID" value="CAI81564.1"/>
    <property type="molecule type" value="Genomic_DNA"/>
</dbReference>
<dbReference type="RefSeq" id="WP_000595399.1">
    <property type="nucleotide sequence ID" value="NC_007622.1"/>
</dbReference>
<dbReference type="SMR" id="Q2YU84"/>
<dbReference type="KEGG" id="sab:SAB1875c"/>
<dbReference type="HOGENOM" id="CLU_055394_0_1_9"/>
<dbReference type="GO" id="GO:0005576">
    <property type="term" value="C:extracellular region"/>
    <property type="evidence" value="ECO:0007669"/>
    <property type="project" value="InterPro"/>
</dbReference>
<dbReference type="GO" id="GO:0051715">
    <property type="term" value="P:cytolysis in another organism"/>
    <property type="evidence" value="ECO:0007669"/>
    <property type="project" value="InterPro"/>
</dbReference>
<dbReference type="Gene3D" id="2.70.240.10">
    <property type="entry name" value="Leukocidin/porin MspA"/>
    <property type="match status" value="1"/>
</dbReference>
<dbReference type="InterPro" id="IPR003963">
    <property type="entry name" value="Bi-component_toxin_staph"/>
</dbReference>
<dbReference type="InterPro" id="IPR016183">
    <property type="entry name" value="Leukocidin/Hemolysin_toxin"/>
</dbReference>
<dbReference type="InterPro" id="IPR036435">
    <property type="entry name" value="Leukocidin/porin_MspA_sf"/>
</dbReference>
<dbReference type="NCBIfam" id="TIGR01002">
    <property type="entry name" value="hlyII"/>
    <property type="match status" value="1"/>
</dbReference>
<dbReference type="Pfam" id="PF07968">
    <property type="entry name" value="Leukocidin"/>
    <property type="match status" value="1"/>
</dbReference>
<dbReference type="PRINTS" id="PR01468">
    <property type="entry name" value="BICOMPNTOXIN"/>
</dbReference>
<dbReference type="SUPFAM" id="SSF56959">
    <property type="entry name" value="Leukocidin-like"/>
    <property type="match status" value="1"/>
</dbReference>
<keyword id="KW-0732">Signal</keyword>
<feature type="signal peptide" evidence="1">
    <location>
        <begin position="1"/>
        <end position="29"/>
    </location>
</feature>
<feature type="chain" id="PRO_0000298631" description="Uncharacterized leukocidin-like protein 1">
    <location>
        <begin position="30"/>
        <end position="338"/>
    </location>
</feature>
<name>LUKL1_STAAB</name>
<gene>
    <name type="ordered locus">SAB1875c</name>
</gene>
<accession>Q2YU84</accession>
<reference key="1">
    <citation type="journal article" date="2007" name="PLoS ONE">
        <title>Molecular correlates of host specialization in Staphylococcus aureus.</title>
        <authorList>
            <person name="Herron-Olson L."/>
            <person name="Fitzgerald J.R."/>
            <person name="Musser J.M."/>
            <person name="Kapur V."/>
        </authorList>
    </citation>
    <scope>NUCLEOTIDE SEQUENCE [LARGE SCALE GENOMIC DNA]</scope>
    <source>
        <strain>bovine RF122 / ET3-1</strain>
    </source>
</reference>
<protein>
    <recommendedName>
        <fullName>Uncharacterized leukocidin-like protein 1</fullName>
    </recommendedName>
</protein>